<organism>
    <name type="scientific">Yersinia pseudotuberculosis serotype O:1b (strain IP 31758)</name>
    <dbReference type="NCBI Taxonomy" id="349747"/>
    <lineage>
        <taxon>Bacteria</taxon>
        <taxon>Pseudomonadati</taxon>
        <taxon>Pseudomonadota</taxon>
        <taxon>Gammaproteobacteria</taxon>
        <taxon>Enterobacterales</taxon>
        <taxon>Yersiniaceae</taxon>
        <taxon>Yersinia</taxon>
    </lineage>
</organism>
<sequence>MQQRRPIRRALLSVSDKAGIIEFAQALSQRGIELLSTGGTARLLADAGLPVTEVSDYTGFPEMMDGRVKTLHPKVHGGILGRRGQDDGIMAQHGIQPIDIVVVNLYPFAQTVARPDCSLEDAVENIDIGGPTMVRSAAKNHKDVAIVVKSSDYPAIITELDNNDGSLTYPTRFNLAIKAFEHTAAYDSMIANYFGTLVPPYHGDTEQPSGHFPRTLNLNYIKKQDMRYGENSHQQAAFYIEEDVKEASVATAQQLQGKALSYNNIADTDAALECVKEFSEPACVIVKHANPCGVAIGDSILAAYERAYQTDPTSAFGGIIAFNRELDAATASAIISRQFVEVIIAPTVSSDALALLAAKQNVRVLTCGQWQARSAGLDFKRVNGGLLVQERDLGMVTAADLRVVSKRQPTEQELRDALFCWKVAKFVKSNAIVYARDNMTIGIGAGQMSRVYSAKIAGIKAADEGLEVAGSAMASDAFFPFRDGIDAAAAVGITCVIQPGGSIRDDEVIAAADEHSIAMIFTDMRHFRH</sequence>
<accession>A7FNG6</accession>
<name>PUR9_YERP3</name>
<reference key="1">
    <citation type="journal article" date="2007" name="PLoS Genet.">
        <title>The complete genome sequence of Yersinia pseudotuberculosis IP31758, the causative agent of Far East scarlet-like fever.</title>
        <authorList>
            <person name="Eppinger M."/>
            <person name="Rosovitz M.J."/>
            <person name="Fricke W.F."/>
            <person name="Rasko D.A."/>
            <person name="Kokorina G."/>
            <person name="Fayolle C."/>
            <person name="Lindler L.E."/>
            <person name="Carniel E."/>
            <person name="Ravel J."/>
        </authorList>
    </citation>
    <scope>NUCLEOTIDE SEQUENCE [LARGE SCALE GENOMIC DNA]</scope>
    <source>
        <strain>IP 31758</strain>
    </source>
</reference>
<comment type="catalytic activity">
    <reaction evidence="1">
        <text>(6R)-10-formyltetrahydrofolate + 5-amino-1-(5-phospho-beta-D-ribosyl)imidazole-4-carboxamide = 5-formamido-1-(5-phospho-D-ribosyl)imidazole-4-carboxamide + (6S)-5,6,7,8-tetrahydrofolate</text>
        <dbReference type="Rhea" id="RHEA:22192"/>
        <dbReference type="ChEBI" id="CHEBI:57453"/>
        <dbReference type="ChEBI" id="CHEBI:58467"/>
        <dbReference type="ChEBI" id="CHEBI:58475"/>
        <dbReference type="ChEBI" id="CHEBI:195366"/>
        <dbReference type="EC" id="2.1.2.3"/>
    </reaction>
</comment>
<comment type="catalytic activity">
    <reaction evidence="1">
        <text>IMP + H2O = 5-formamido-1-(5-phospho-D-ribosyl)imidazole-4-carboxamide</text>
        <dbReference type="Rhea" id="RHEA:18445"/>
        <dbReference type="ChEBI" id="CHEBI:15377"/>
        <dbReference type="ChEBI" id="CHEBI:58053"/>
        <dbReference type="ChEBI" id="CHEBI:58467"/>
        <dbReference type="EC" id="3.5.4.10"/>
    </reaction>
</comment>
<comment type="pathway">
    <text evidence="1">Purine metabolism; IMP biosynthesis via de novo pathway; 5-formamido-1-(5-phospho-D-ribosyl)imidazole-4-carboxamide from 5-amino-1-(5-phospho-D-ribosyl)imidazole-4-carboxamide (10-formyl THF route): step 1/1.</text>
</comment>
<comment type="pathway">
    <text evidence="1">Purine metabolism; IMP biosynthesis via de novo pathway; IMP from 5-formamido-1-(5-phospho-D-ribosyl)imidazole-4-carboxamide: step 1/1.</text>
</comment>
<comment type="domain">
    <text evidence="1">The IMP cyclohydrolase activity resides in the N-terminal region.</text>
</comment>
<comment type="similarity">
    <text evidence="1">Belongs to the PurH family.</text>
</comment>
<protein>
    <recommendedName>
        <fullName evidence="1">Bifunctional purine biosynthesis protein PurH</fullName>
    </recommendedName>
    <domain>
        <recommendedName>
            <fullName evidence="1">Phosphoribosylaminoimidazolecarboxamide formyltransferase</fullName>
            <ecNumber evidence="1">2.1.2.3</ecNumber>
        </recommendedName>
        <alternativeName>
            <fullName evidence="1">AICAR transformylase</fullName>
        </alternativeName>
    </domain>
    <domain>
        <recommendedName>
            <fullName evidence="1">IMP cyclohydrolase</fullName>
            <ecNumber evidence="1">3.5.4.10</ecNumber>
        </recommendedName>
        <alternativeName>
            <fullName evidence="1">ATIC</fullName>
        </alternativeName>
        <alternativeName>
            <fullName evidence="1">IMP synthase</fullName>
        </alternativeName>
        <alternativeName>
            <fullName evidence="1">Inosinicase</fullName>
        </alternativeName>
    </domain>
</protein>
<gene>
    <name evidence="1" type="primary">purH</name>
    <name type="ordered locus">YpsIP31758_3843</name>
</gene>
<feature type="chain" id="PRO_1000057917" description="Bifunctional purine biosynthesis protein PurH">
    <location>
        <begin position="1"/>
        <end position="529"/>
    </location>
</feature>
<feature type="domain" description="MGS-like" evidence="2">
    <location>
        <begin position="1"/>
        <end position="148"/>
    </location>
</feature>
<proteinExistence type="inferred from homology"/>
<keyword id="KW-0378">Hydrolase</keyword>
<keyword id="KW-0511">Multifunctional enzyme</keyword>
<keyword id="KW-0658">Purine biosynthesis</keyword>
<keyword id="KW-0808">Transferase</keyword>
<evidence type="ECO:0000255" key="1">
    <source>
        <dbReference type="HAMAP-Rule" id="MF_00139"/>
    </source>
</evidence>
<evidence type="ECO:0000255" key="2">
    <source>
        <dbReference type="PROSITE-ProRule" id="PRU01202"/>
    </source>
</evidence>
<dbReference type="EC" id="2.1.2.3" evidence="1"/>
<dbReference type="EC" id="3.5.4.10" evidence="1"/>
<dbReference type="EMBL" id="CP000720">
    <property type="protein sequence ID" value="ABS48922.1"/>
    <property type="molecule type" value="Genomic_DNA"/>
</dbReference>
<dbReference type="RefSeq" id="WP_002210692.1">
    <property type="nucleotide sequence ID" value="NC_009708.1"/>
</dbReference>
<dbReference type="SMR" id="A7FNG6"/>
<dbReference type="GeneID" id="57974989"/>
<dbReference type="KEGG" id="ypi:YpsIP31758_3843"/>
<dbReference type="HOGENOM" id="CLU_016316_5_2_6"/>
<dbReference type="UniPathway" id="UPA00074">
    <property type="reaction ID" value="UER00133"/>
</dbReference>
<dbReference type="UniPathway" id="UPA00074">
    <property type="reaction ID" value="UER00135"/>
</dbReference>
<dbReference type="Proteomes" id="UP000002412">
    <property type="component" value="Chromosome"/>
</dbReference>
<dbReference type="GO" id="GO:0005829">
    <property type="term" value="C:cytosol"/>
    <property type="evidence" value="ECO:0007669"/>
    <property type="project" value="TreeGrafter"/>
</dbReference>
<dbReference type="GO" id="GO:0003937">
    <property type="term" value="F:IMP cyclohydrolase activity"/>
    <property type="evidence" value="ECO:0007669"/>
    <property type="project" value="UniProtKB-UniRule"/>
</dbReference>
<dbReference type="GO" id="GO:0004643">
    <property type="term" value="F:phosphoribosylaminoimidazolecarboxamide formyltransferase activity"/>
    <property type="evidence" value="ECO:0007669"/>
    <property type="project" value="UniProtKB-UniRule"/>
</dbReference>
<dbReference type="GO" id="GO:0006189">
    <property type="term" value="P:'de novo' IMP biosynthetic process"/>
    <property type="evidence" value="ECO:0007669"/>
    <property type="project" value="UniProtKB-UniRule"/>
</dbReference>
<dbReference type="CDD" id="cd01421">
    <property type="entry name" value="IMPCH"/>
    <property type="match status" value="1"/>
</dbReference>
<dbReference type="FunFam" id="3.40.140.20:FF:000001">
    <property type="entry name" value="Bifunctional purine biosynthesis protein PurH"/>
    <property type="match status" value="1"/>
</dbReference>
<dbReference type="FunFam" id="3.40.140.20:FF:000002">
    <property type="entry name" value="Bifunctional purine biosynthesis protein PurH"/>
    <property type="match status" value="1"/>
</dbReference>
<dbReference type="FunFam" id="3.40.50.1380:FF:000001">
    <property type="entry name" value="Bifunctional purine biosynthesis protein PurH"/>
    <property type="match status" value="1"/>
</dbReference>
<dbReference type="Gene3D" id="3.40.140.20">
    <property type="match status" value="2"/>
</dbReference>
<dbReference type="Gene3D" id="3.40.50.1380">
    <property type="entry name" value="Methylglyoxal synthase-like domain"/>
    <property type="match status" value="1"/>
</dbReference>
<dbReference type="HAMAP" id="MF_00139">
    <property type="entry name" value="PurH"/>
    <property type="match status" value="1"/>
</dbReference>
<dbReference type="InterPro" id="IPR024051">
    <property type="entry name" value="AICAR_Tfase_dup_dom_sf"/>
</dbReference>
<dbReference type="InterPro" id="IPR016193">
    <property type="entry name" value="Cytidine_deaminase-like"/>
</dbReference>
<dbReference type="InterPro" id="IPR011607">
    <property type="entry name" value="MGS-like_dom"/>
</dbReference>
<dbReference type="InterPro" id="IPR036914">
    <property type="entry name" value="MGS-like_dom_sf"/>
</dbReference>
<dbReference type="InterPro" id="IPR002695">
    <property type="entry name" value="PurH-like"/>
</dbReference>
<dbReference type="NCBIfam" id="NF002049">
    <property type="entry name" value="PRK00881.1"/>
    <property type="match status" value="1"/>
</dbReference>
<dbReference type="NCBIfam" id="TIGR00355">
    <property type="entry name" value="purH"/>
    <property type="match status" value="1"/>
</dbReference>
<dbReference type="PANTHER" id="PTHR11692:SF0">
    <property type="entry name" value="BIFUNCTIONAL PURINE BIOSYNTHESIS PROTEIN ATIC"/>
    <property type="match status" value="1"/>
</dbReference>
<dbReference type="PANTHER" id="PTHR11692">
    <property type="entry name" value="BIFUNCTIONAL PURINE BIOSYNTHESIS PROTEIN PURH"/>
    <property type="match status" value="1"/>
</dbReference>
<dbReference type="Pfam" id="PF01808">
    <property type="entry name" value="AICARFT_IMPCHas"/>
    <property type="match status" value="1"/>
</dbReference>
<dbReference type="Pfam" id="PF02142">
    <property type="entry name" value="MGS"/>
    <property type="match status" value="1"/>
</dbReference>
<dbReference type="PIRSF" id="PIRSF000414">
    <property type="entry name" value="AICARFT_IMPCHas"/>
    <property type="match status" value="1"/>
</dbReference>
<dbReference type="SMART" id="SM00798">
    <property type="entry name" value="AICARFT_IMPCHas"/>
    <property type="match status" value="1"/>
</dbReference>
<dbReference type="SMART" id="SM00851">
    <property type="entry name" value="MGS"/>
    <property type="match status" value="1"/>
</dbReference>
<dbReference type="SUPFAM" id="SSF53927">
    <property type="entry name" value="Cytidine deaminase-like"/>
    <property type="match status" value="1"/>
</dbReference>
<dbReference type="SUPFAM" id="SSF52335">
    <property type="entry name" value="Methylglyoxal synthase-like"/>
    <property type="match status" value="1"/>
</dbReference>
<dbReference type="PROSITE" id="PS51855">
    <property type="entry name" value="MGS"/>
    <property type="match status" value="1"/>
</dbReference>